<proteinExistence type="inferred from homology"/>
<feature type="chain" id="PRO_0000209625" description="Regulator of ribonuclease activity A">
    <location>
        <begin position="1"/>
        <end position="166"/>
    </location>
</feature>
<organism>
    <name type="scientific">Pasteurella multocida (strain Pm70)</name>
    <dbReference type="NCBI Taxonomy" id="272843"/>
    <lineage>
        <taxon>Bacteria</taxon>
        <taxon>Pseudomonadati</taxon>
        <taxon>Pseudomonadota</taxon>
        <taxon>Gammaproteobacteria</taxon>
        <taxon>Pasteurellales</taxon>
        <taxon>Pasteurellaceae</taxon>
        <taxon>Pasteurella</taxon>
    </lineage>
</organism>
<name>RRAA_PASMU</name>
<dbReference type="EMBL" id="AE004439">
    <property type="protein sequence ID" value="AAK03252.1"/>
    <property type="molecule type" value="Genomic_DNA"/>
</dbReference>
<dbReference type="RefSeq" id="WP_005717542.1">
    <property type="nucleotide sequence ID" value="NC_002663.1"/>
</dbReference>
<dbReference type="SMR" id="Q9CLP9"/>
<dbReference type="STRING" id="272843.PM1168"/>
<dbReference type="EnsemblBacteria" id="AAK03252">
    <property type="protein sequence ID" value="AAK03252"/>
    <property type="gene ID" value="PM1168"/>
</dbReference>
<dbReference type="GeneID" id="77206484"/>
<dbReference type="KEGG" id="pmu:PM1168"/>
<dbReference type="HOGENOM" id="CLU_072626_4_0_6"/>
<dbReference type="OrthoDB" id="943692at2"/>
<dbReference type="Proteomes" id="UP000000809">
    <property type="component" value="Chromosome"/>
</dbReference>
<dbReference type="GO" id="GO:0005737">
    <property type="term" value="C:cytoplasm"/>
    <property type="evidence" value="ECO:0007669"/>
    <property type="project" value="UniProtKB-SubCell"/>
</dbReference>
<dbReference type="GO" id="GO:0060698">
    <property type="term" value="F:endoribonuclease inhibitor activity"/>
    <property type="evidence" value="ECO:0007669"/>
    <property type="project" value="UniProtKB-UniRule"/>
</dbReference>
<dbReference type="GO" id="GO:0019899">
    <property type="term" value="F:enzyme binding"/>
    <property type="evidence" value="ECO:0007669"/>
    <property type="project" value="UniProtKB-UniRule"/>
</dbReference>
<dbReference type="GO" id="GO:0051252">
    <property type="term" value="P:regulation of RNA metabolic process"/>
    <property type="evidence" value="ECO:0007669"/>
    <property type="project" value="InterPro"/>
</dbReference>
<dbReference type="CDD" id="cd16841">
    <property type="entry name" value="RraA_family"/>
    <property type="match status" value="1"/>
</dbReference>
<dbReference type="Gene3D" id="3.50.30.40">
    <property type="entry name" value="Ribonuclease E inhibitor RraA/RraA-like"/>
    <property type="match status" value="1"/>
</dbReference>
<dbReference type="HAMAP" id="MF_00471">
    <property type="entry name" value="RraA"/>
    <property type="match status" value="1"/>
</dbReference>
<dbReference type="InterPro" id="IPR010203">
    <property type="entry name" value="RraA"/>
</dbReference>
<dbReference type="InterPro" id="IPR005493">
    <property type="entry name" value="RraA/RraA-like"/>
</dbReference>
<dbReference type="InterPro" id="IPR036704">
    <property type="entry name" value="RraA/RraA-like_sf"/>
</dbReference>
<dbReference type="InterPro" id="IPR014339">
    <property type="entry name" value="RraA_gpbac"/>
</dbReference>
<dbReference type="NCBIfam" id="TIGR01935">
    <property type="entry name" value="NOT-MenG"/>
    <property type="match status" value="1"/>
</dbReference>
<dbReference type="NCBIfam" id="NF006875">
    <property type="entry name" value="PRK09372.1"/>
    <property type="match status" value="1"/>
</dbReference>
<dbReference type="NCBIfam" id="TIGR02998">
    <property type="entry name" value="RraA_entero"/>
    <property type="match status" value="1"/>
</dbReference>
<dbReference type="PANTHER" id="PTHR33254">
    <property type="entry name" value="4-HYDROXY-4-METHYL-2-OXOGLUTARATE ALDOLASE 3-RELATED"/>
    <property type="match status" value="1"/>
</dbReference>
<dbReference type="PANTHER" id="PTHR33254:SF29">
    <property type="entry name" value="REGULATOR OF RIBONUCLEASE ACTIVITY A"/>
    <property type="match status" value="1"/>
</dbReference>
<dbReference type="Pfam" id="PF03737">
    <property type="entry name" value="RraA-like"/>
    <property type="match status" value="1"/>
</dbReference>
<dbReference type="SUPFAM" id="SSF89562">
    <property type="entry name" value="RraA-like"/>
    <property type="match status" value="1"/>
</dbReference>
<protein>
    <recommendedName>
        <fullName evidence="1">Regulator of ribonuclease activity A</fullName>
    </recommendedName>
</protein>
<gene>
    <name evidence="1" type="primary">rraA</name>
    <name type="ordered locus">PM1168</name>
</gene>
<sequence length="166" mass="18144">MYIDTSELCDIYLDQVDVVEPIFSSFGGVNRFYGKVTTVKCFENNGLITDILEENGEGRVLLIDGGGAVRRALVDAELAQLAVDNGWEGIIVYGAVRQIQQLEEMDIGIHALAPIPVGADKQNIGEIDVPVNFGGVTFFPEDYVYADLTGIILSQEPLELDEFNDA</sequence>
<keyword id="KW-0963">Cytoplasm</keyword>
<keyword id="KW-1185">Reference proteome</keyword>
<reference key="1">
    <citation type="journal article" date="2001" name="Proc. Natl. Acad. Sci. U.S.A.">
        <title>Complete genomic sequence of Pasteurella multocida Pm70.</title>
        <authorList>
            <person name="May B.J."/>
            <person name="Zhang Q."/>
            <person name="Li L.L."/>
            <person name="Paustian M.L."/>
            <person name="Whittam T.S."/>
            <person name="Kapur V."/>
        </authorList>
    </citation>
    <scope>NUCLEOTIDE SEQUENCE [LARGE SCALE GENOMIC DNA]</scope>
    <source>
        <strain>Pm70</strain>
    </source>
</reference>
<comment type="function">
    <text evidence="1">Globally modulates RNA abundance by binding to RNase E (Rne) and regulating its endonucleolytic activity. Can modulate Rne action in a substrate-dependent manner by altering the composition of the degradosome. Modulates RNA-binding and helicase activities of the degradosome.</text>
</comment>
<comment type="subunit">
    <text evidence="1">Homotrimer. Binds to both RNA-binding sites in the C-terminal region of Rne and to RhlB.</text>
</comment>
<comment type="subcellular location">
    <subcellularLocation>
        <location evidence="1">Cytoplasm</location>
    </subcellularLocation>
</comment>
<comment type="similarity">
    <text evidence="1">Belongs to the RraA family.</text>
</comment>
<accession>Q9CLP9</accession>
<evidence type="ECO:0000255" key="1">
    <source>
        <dbReference type="HAMAP-Rule" id="MF_00471"/>
    </source>
</evidence>